<protein>
    <recommendedName>
        <fullName evidence="1">D-erythrose-4-phosphate dehydrogenase</fullName>
        <shortName evidence="1">E4PDH</shortName>
        <ecNumber evidence="1">1.2.1.72</ecNumber>
    </recommendedName>
</protein>
<organism>
    <name type="scientific">Klebsiella pneumoniae (strain 342)</name>
    <dbReference type="NCBI Taxonomy" id="507522"/>
    <lineage>
        <taxon>Bacteria</taxon>
        <taxon>Pseudomonadati</taxon>
        <taxon>Pseudomonadota</taxon>
        <taxon>Gammaproteobacteria</taxon>
        <taxon>Enterobacterales</taxon>
        <taxon>Enterobacteriaceae</taxon>
        <taxon>Klebsiella/Raoultella group</taxon>
        <taxon>Klebsiella</taxon>
        <taxon>Klebsiella pneumoniae complex</taxon>
    </lineage>
</organism>
<gene>
    <name evidence="1" type="primary">epd</name>
    <name type="ordered locus">KPK_0743</name>
</gene>
<proteinExistence type="inferred from homology"/>
<comment type="function">
    <text evidence="1">Catalyzes the NAD-dependent conversion of D-erythrose 4-phosphate to 4-phosphoerythronate.</text>
</comment>
<comment type="catalytic activity">
    <reaction evidence="1">
        <text>D-erythrose 4-phosphate + NAD(+) + H2O = 4-phospho-D-erythronate + NADH + 2 H(+)</text>
        <dbReference type="Rhea" id="RHEA:12056"/>
        <dbReference type="ChEBI" id="CHEBI:15377"/>
        <dbReference type="ChEBI" id="CHEBI:15378"/>
        <dbReference type="ChEBI" id="CHEBI:16897"/>
        <dbReference type="ChEBI" id="CHEBI:57540"/>
        <dbReference type="ChEBI" id="CHEBI:57945"/>
        <dbReference type="ChEBI" id="CHEBI:58766"/>
        <dbReference type="EC" id="1.2.1.72"/>
    </reaction>
</comment>
<comment type="pathway">
    <text evidence="1">Cofactor biosynthesis; pyridoxine 5'-phosphate biosynthesis; pyridoxine 5'-phosphate from D-erythrose 4-phosphate: step 1/5.</text>
</comment>
<comment type="subunit">
    <text evidence="1">Homotetramer.</text>
</comment>
<comment type="subcellular location">
    <subcellularLocation>
        <location evidence="1">Cytoplasm</location>
    </subcellularLocation>
</comment>
<comment type="similarity">
    <text evidence="1">Belongs to the glyceraldehyde-3-phosphate dehydrogenase family. Epd subfamily.</text>
</comment>
<evidence type="ECO:0000255" key="1">
    <source>
        <dbReference type="HAMAP-Rule" id="MF_01640"/>
    </source>
</evidence>
<dbReference type="EC" id="1.2.1.72" evidence="1"/>
<dbReference type="EMBL" id="CP000964">
    <property type="protein sequence ID" value="ACI08746.1"/>
    <property type="molecule type" value="Genomic_DNA"/>
</dbReference>
<dbReference type="SMR" id="B5XUB7"/>
<dbReference type="KEGG" id="kpe:KPK_0743"/>
<dbReference type="HOGENOM" id="CLU_030140_0_0_6"/>
<dbReference type="UniPathway" id="UPA00244">
    <property type="reaction ID" value="UER00309"/>
</dbReference>
<dbReference type="Proteomes" id="UP000001734">
    <property type="component" value="Chromosome"/>
</dbReference>
<dbReference type="GO" id="GO:0005737">
    <property type="term" value="C:cytoplasm"/>
    <property type="evidence" value="ECO:0007669"/>
    <property type="project" value="UniProtKB-SubCell"/>
</dbReference>
<dbReference type="GO" id="GO:0048001">
    <property type="term" value="F:erythrose-4-phosphate dehydrogenase activity"/>
    <property type="evidence" value="ECO:0007669"/>
    <property type="project" value="UniProtKB-UniRule"/>
</dbReference>
<dbReference type="GO" id="GO:0051287">
    <property type="term" value="F:NAD binding"/>
    <property type="evidence" value="ECO:0007669"/>
    <property type="project" value="InterPro"/>
</dbReference>
<dbReference type="GO" id="GO:0042823">
    <property type="term" value="P:pyridoxal phosphate biosynthetic process"/>
    <property type="evidence" value="ECO:0007669"/>
    <property type="project" value="UniProtKB-UniRule"/>
</dbReference>
<dbReference type="GO" id="GO:0008615">
    <property type="term" value="P:pyridoxine biosynthetic process"/>
    <property type="evidence" value="ECO:0007669"/>
    <property type="project" value="UniProtKB-UniRule"/>
</dbReference>
<dbReference type="CDD" id="cd23937">
    <property type="entry name" value="GAPDH_C_E4PDH"/>
    <property type="match status" value="1"/>
</dbReference>
<dbReference type="CDD" id="cd17892">
    <property type="entry name" value="GAPDH_N_E4PDH"/>
    <property type="match status" value="1"/>
</dbReference>
<dbReference type="FunFam" id="3.30.360.10:FF:000007">
    <property type="entry name" value="D-erythrose-4-phosphate dehydrogenase"/>
    <property type="match status" value="1"/>
</dbReference>
<dbReference type="FunFam" id="3.40.50.720:FF:000001">
    <property type="entry name" value="Glyceraldehyde-3-phosphate dehydrogenase"/>
    <property type="match status" value="1"/>
</dbReference>
<dbReference type="Gene3D" id="3.30.360.10">
    <property type="entry name" value="Dihydrodipicolinate Reductase, domain 2"/>
    <property type="match status" value="1"/>
</dbReference>
<dbReference type="Gene3D" id="3.40.50.720">
    <property type="entry name" value="NAD(P)-binding Rossmann-like Domain"/>
    <property type="match status" value="1"/>
</dbReference>
<dbReference type="HAMAP" id="MF_01640">
    <property type="entry name" value="E4P_dehydrog"/>
    <property type="match status" value="1"/>
</dbReference>
<dbReference type="InterPro" id="IPR006422">
    <property type="entry name" value="E4P_DH_bac"/>
</dbReference>
<dbReference type="InterPro" id="IPR020831">
    <property type="entry name" value="GlycerAld/Erythrose_P_DH"/>
</dbReference>
<dbReference type="InterPro" id="IPR020830">
    <property type="entry name" value="GlycerAld_3-P_DH_AS"/>
</dbReference>
<dbReference type="InterPro" id="IPR020829">
    <property type="entry name" value="GlycerAld_3-P_DH_cat"/>
</dbReference>
<dbReference type="InterPro" id="IPR020828">
    <property type="entry name" value="GlycerAld_3-P_DH_NAD(P)-bd"/>
</dbReference>
<dbReference type="InterPro" id="IPR036291">
    <property type="entry name" value="NAD(P)-bd_dom_sf"/>
</dbReference>
<dbReference type="NCBIfam" id="TIGR01532">
    <property type="entry name" value="E4PD_g-proteo"/>
    <property type="match status" value="1"/>
</dbReference>
<dbReference type="NCBIfam" id="NF010058">
    <property type="entry name" value="PRK13535.1"/>
    <property type="match status" value="1"/>
</dbReference>
<dbReference type="PANTHER" id="PTHR43148">
    <property type="entry name" value="GLYCERALDEHYDE-3-PHOSPHATE DEHYDROGENASE 2"/>
    <property type="match status" value="1"/>
</dbReference>
<dbReference type="Pfam" id="PF02800">
    <property type="entry name" value="Gp_dh_C"/>
    <property type="match status" value="1"/>
</dbReference>
<dbReference type="Pfam" id="PF00044">
    <property type="entry name" value="Gp_dh_N"/>
    <property type="match status" value="1"/>
</dbReference>
<dbReference type="PIRSF" id="PIRSF000149">
    <property type="entry name" value="GAP_DH"/>
    <property type="match status" value="1"/>
</dbReference>
<dbReference type="PRINTS" id="PR00078">
    <property type="entry name" value="G3PDHDRGNASE"/>
</dbReference>
<dbReference type="SMART" id="SM00846">
    <property type="entry name" value="Gp_dh_N"/>
    <property type="match status" value="1"/>
</dbReference>
<dbReference type="SUPFAM" id="SSF55347">
    <property type="entry name" value="Glyceraldehyde-3-phosphate dehydrogenase-like, C-terminal domain"/>
    <property type="match status" value="1"/>
</dbReference>
<dbReference type="SUPFAM" id="SSF51735">
    <property type="entry name" value="NAD(P)-binding Rossmann-fold domains"/>
    <property type="match status" value="1"/>
</dbReference>
<dbReference type="PROSITE" id="PS00071">
    <property type="entry name" value="GAPDH"/>
    <property type="match status" value="1"/>
</dbReference>
<sequence>MTIRIAINGFGRIGRNVVRALYESGRRAEITVVAINELADAAGIAHLLKYDTSHGRFAWDVRQEREQLFVGDDAIRLLHEPTIAALPWRELAVDVVLDCTGVYGSREHGEAHLQAGAKKVLFSHPGGNDLDATVVYGVNQDELRAEHRIVSNASCTTNCIIPIIKLLDDAYGIESGTVTTIHSAMHDQQVIDAYHPDLRRTRAASQSIIPVDTKLAAGITRIFPQFNDRFEAIAVRVPTINVTAIDLSVTVKKPVKACEVNQLLQKAAQGAFHGIVDYTELPLVSTDFNHDPHSAIVDGTQTRVSGAHLIKTLVWCDNEWGFANRMLDTTLAMAAIGFRFDA</sequence>
<name>E4PD_KLEP3</name>
<accession>B5XUB7</accession>
<reference key="1">
    <citation type="journal article" date="2008" name="PLoS Genet.">
        <title>Complete genome sequence of the N2-fixing broad host range endophyte Klebsiella pneumoniae 342 and virulence predictions verified in mice.</title>
        <authorList>
            <person name="Fouts D.E."/>
            <person name="Tyler H.L."/>
            <person name="DeBoy R.T."/>
            <person name="Daugherty S."/>
            <person name="Ren Q."/>
            <person name="Badger J.H."/>
            <person name="Durkin A.S."/>
            <person name="Huot H."/>
            <person name="Shrivastava S."/>
            <person name="Kothari S."/>
            <person name="Dodson R.J."/>
            <person name="Mohamoud Y."/>
            <person name="Khouri H."/>
            <person name="Roesch L.F.W."/>
            <person name="Krogfelt K.A."/>
            <person name="Struve C."/>
            <person name="Triplett E.W."/>
            <person name="Methe B.A."/>
        </authorList>
    </citation>
    <scope>NUCLEOTIDE SEQUENCE [LARGE SCALE GENOMIC DNA]</scope>
    <source>
        <strain>342</strain>
    </source>
</reference>
<keyword id="KW-0963">Cytoplasm</keyword>
<keyword id="KW-0520">NAD</keyword>
<keyword id="KW-0560">Oxidoreductase</keyword>
<keyword id="KW-0664">Pyridoxine biosynthesis</keyword>
<feature type="chain" id="PRO_1000186830" description="D-erythrose-4-phosphate dehydrogenase">
    <location>
        <begin position="1"/>
        <end position="342"/>
    </location>
</feature>
<feature type="active site" description="Nucleophile" evidence="1">
    <location>
        <position position="155"/>
    </location>
</feature>
<feature type="binding site" evidence="1">
    <location>
        <begin position="12"/>
        <end position="13"/>
    </location>
    <ligand>
        <name>NAD(+)</name>
        <dbReference type="ChEBI" id="CHEBI:57540"/>
    </ligand>
</feature>
<feature type="binding site" evidence="1">
    <location>
        <begin position="154"/>
        <end position="156"/>
    </location>
    <ligand>
        <name>substrate</name>
    </ligand>
</feature>
<feature type="binding site" evidence="1">
    <location>
        <position position="200"/>
    </location>
    <ligand>
        <name>substrate</name>
    </ligand>
</feature>
<feature type="binding site" evidence="1">
    <location>
        <begin position="213"/>
        <end position="214"/>
    </location>
    <ligand>
        <name>substrate</name>
    </ligand>
</feature>
<feature type="binding site" evidence="1">
    <location>
        <position position="236"/>
    </location>
    <ligand>
        <name>substrate</name>
    </ligand>
</feature>
<feature type="binding site" evidence="1">
    <location>
        <position position="318"/>
    </location>
    <ligand>
        <name>NAD(+)</name>
        <dbReference type="ChEBI" id="CHEBI:57540"/>
    </ligand>
</feature>
<feature type="site" description="Activates thiol group during catalysis" evidence="1">
    <location>
        <position position="182"/>
    </location>
</feature>